<organism>
    <name type="scientific">Salmonella gallinarum (strain 287/91 / NCTC 13346)</name>
    <dbReference type="NCBI Taxonomy" id="550538"/>
    <lineage>
        <taxon>Bacteria</taxon>
        <taxon>Pseudomonadati</taxon>
        <taxon>Pseudomonadota</taxon>
        <taxon>Gammaproteobacteria</taxon>
        <taxon>Enterobacterales</taxon>
        <taxon>Enterobacteriaceae</taxon>
        <taxon>Salmonella</taxon>
    </lineage>
</organism>
<proteinExistence type="inferred from homology"/>
<gene>
    <name evidence="1" type="primary">rplT</name>
    <name type="ordered locus">SG1781</name>
</gene>
<accession>B5RAX0</accession>
<comment type="function">
    <text evidence="1">Binds directly to 23S ribosomal RNA and is necessary for the in vitro assembly process of the 50S ribosomal subunit. It is not involved in the protein synthesizing functions of that subunit.</text>
</comment>
<comment type="similarity">
    <text evidence="1">Belongs to the bacterial ribosomal protein bL20 family.</text>
</comment>
<protein>
    <recommendedName>
        <fullName evidence="1">Large ribosomal subunit protein bL20</fullName>
    </recommendedName>
    <alternativeName>
        <fullName evidence="2">50S ribosomal protein L20</fullName>
    </alternativeName>
</protein>
<reference key="1">
    <citation type="journal article" date="2008" name="Genome Res.">
        <title>Comparative genome analysis of Salmonella enteritidis PT4 and Salmonella gallinarum 287/91 provides insights into evolutionary and host adaptation pathways.</title>
        <authorList>
            <person name="Thomson N.R."/>
            <person name="Clayton D.J."/>
            <person name="Windhorst D."/>
            <person name="Vernikos G."/>
            <person name="Davidson S."/>
            <person name="Churcher C."/>
            <person name="Quail M.A."/>
            <person name="Stevens M."/>
            <person name="Jones M.A."/>
            <person name="Watson M."/>
            <person name="Barron A."/>
            <person name="Layton A."/>
            <person name="Pickard D."/>
            <person name="Kingsley R.A."/>
            <person name="Bignell A."/>
            <person name="Clark L."/>
            <person name="Harris B."/>
            <person name="Ormond D."/>
            <person name="Abdellah Z."/>
            <person name="Brooks K."/>
            <person name="Cherevach I."/>
            <person name="Chillingworth T."/>
            <person name="Woodward J."/>
            <person name="Norberczak H."/>
            <person name="Lord A."/>
            <person name="Arrowsmith C."/>
            <person name="Jagels K."/>
            <person name="Moule S."/>
            <person name="Mungall K."/>
            <person name="Saunders M."/>
            <person name="Whitehead S."/>
            <person name="Chabalgoity J.A."/>
            <person name="Maskell D."/>
            <person name="Humphreys T."/>
            <person name="Roberts M."/>
            <person name="Barrow P.A."/>
            <person name="Dougan G."/>
            <person name="Parkhill J."/>
        </authorList>
    </citation>
    <scope>NUCLEOTIDE SEQUENCE [LARGE SCALE GENOMIC DNA]</scope>
    <source>
        <strain>287/91 / NCTC 13346</strain>
    </source>
</reference>
<feature type="chain" id="PRO_1000122366" description="Large ribosomal subunit protein bL20">
    <location>
        <begin position="1"/>
        <end position="118"/>
    </location>
</feature>
<dbReference type="EMBL" id="AM933173">
    <property type="protein sequence ID" value="CAR37638.1"/>
    <property type="molecule type" value="Genomic_DNA"/>
</dbReference>
<dbReference type="RefSeq" id="WP_000124850.1">
    <property type="nucleotide sequence ID" value="NC_011274.1"/>
</dbReference>
<dbReference type="SMR" id="B5RAX0"/>
<dbReference type="GeneID" id="98388757"/>
<dbReference type="KEGG" id="seg:SG1781"/>
<dbReference type="HOGENOM" id="CLU_123265_0_1_6"/>
<dbReference type="Proteomes" id="UP000008321">
    <property type="component" value="Chromosome"/>
</dbReference>
<dbReference type="GO" id="GO:1990904">
    <property type="term" value="C:ribonucleoprotein complex"/>
    <property type="evidence" value="ECO:0007669"/>
    <property type="project" value="UniProtKB-KW"/>
</dbReference>
<dbReference type="GO" id="GO:0005840">
    <property type="term" value="C:ribosome"/>
    <property type="evidence" value="ECO:0007669"/>
    <property type="project" value="UniProtKB-KW"/>
</dbReference>
<dbReference type="GO" id="GO:0019843">
    <property type="term" value="F:rRNA binding"/>
    <property type="evidence" value="ECO:0007669"/>
    <property type="project" value="UniProtKB-UniRule"/>
</dbReference>
<dbReference type="GO" id="GO:0003735">
    <property type="term" value="F:structural constituent of ribosome"/>
    <property type="evidence" value="ECO:0007669"/>
    <property type="project" value="InterPro"/>
</dbReference>
<dbReference type="GO" id="GO:0000027">
    <property type="term" value="P:ribosomal large subunit assembly"/>
    <property type="evidence" value="ECO:0007669"/>
    <property type="project" value="UniProtKB-UniRule"/>
</dbReference>
<dbReference type="GO" id="GO:0006412">
    <property type="term" value="P:translation"/>
    <property type="evidence" value="ECO:0007669"/>
    <property type="project" value="InterPro"/>
</dbReference>
<dbReference type="CDD" id="cd07026">
    <property type="entry name" value="Ribosomal_L20"/>
    <property type="match status" value="1"/>
</dbReference>
<dbReference type="FunFam" id="1.10.1900.20:FF:000001">
    <property type="entry name" value="50S ribosomal protein L20"/>
    <property type="match status" value="1"/>
</dbReference>
<dbReference type="Gene3D" id="6.10.160.10">
    <property type="match status" value="1"/>
</dbReference>
<dbReference type="Gene3D" id="1.10.1900.20">
    <property type="entry name" value="Ribosomal protein L20"/>
    <property type="match status" value="1"/>
</dbReference>
<dbReference type="HAMAP" id="MF_00382">
    <property type="entry name" value="Ribosomal_bL20"/>
    <property type="match status" value="1"/>
</dbReference>
<dbReference type="InterPro" id="IPR005813">
    <property type="entry name" value="Ribosomal_bL20"/>
</dbReference>
<dbReference type="InterPro" id="IPR049946">
    <property type="entry name" value="RIBOSOMAL_L20_CS"/>
</dbReference>
<dbReference type="InterPro" id="IPR035566">
    <property type="entry name" value="Ribosomal_protein_bL20_C"/>
</dbReference>
<dbReference type="NCBIfam" id="TIGR01032">
    <property type="entry name" value="rplT_bact"/>
    <property type="match status" value="1"/>
</dbReference>
<dbReference type="PANTHER" id="PTHR10986">
    <property type="entry name" value="39S RIBOSOMAL PROTEIN L20"/>
    <property type="match status" value="1"/>
</dbReference>
<dbReference type="Pfam" id="PF00453">
    <property type="entry name" value="Ribosomal_L20"/>
    <property type="match status" value="1"/>
</dbReference>
<dbReference type="PRINTS" id="PR00062">
    <property type="entry name" value="RIBOSOMALL20"/>
</dbReference>
<dbReference type="SUPFAM" id="SSF74731">
    <property type="entry name" value="Ribosomal protein L20"/>
    <property type="match status" value="1"/>
</dbReference>
<dbReference type="PROSITE" id="PS00937">
    <property type="entry name" value="RIBOSOMAL_L20"/>
    <property type="match status" value="1"/>
</dbReference>
<name>RL20_SALG2</name>
<keyword id="KW-0687">Ribonucleoprotein</keyword>
<keyword id="KW-0689">Ribosomal protein</keyword>
<keyword id="KW-0694">RNA-binding</keyword>
<keyword id="KW-0699">rRNA-binding</keyword>
<evidence type="ECO:0000255" key="1">
    <source>
        <dbReference type="HAMAP-Rule" id="MF_00382"/>
    </source>
</evidence>
<evidence type="ECO:0000305" key="2"/>
<sequence length="118" mass="13497">MARVKRGVIARARHKKILKQAKGYYGARSRVYRVAFQAVIKAGQYAYRDRRQRKRQFRQLWIARINAAARQNGISYSKFINGLKKASVEIDRKILADIAVFDKVAFTALVEKAKAALA</sequence>